<evidence type="ECO:0000255" key="1">
    <source>
        <dbReference type="HAMAP-Rule" id="MF_00023"/>
    </source>
</evidence>
<gene>
    <name evidence="1" type="primary">smpB</name>
    <name type="ordered locus">PTH_2712</name>
</gene>
<name>SSRP_PELTS</name>
<dbReference type="EMBL" id="AP009389">
    <property type="protein sequence ID" value="BAF60893.1"/>
    <property type="molecule type" value="Genomic_DNA"/>
</dbReference>
<dbReference type="SMR" id="A5CYM8"/>
<dbReference type="STRING" id="370438.PTH_2712"/>
<dbReference type="KEGG" id="pth:PTH_2712"/>
<dbReference type="eggNOG" id="COG0691">
    <property type="taxonomic scope" value="Bacteria"/>
</dbReference>
<dbReference type="HOGENOM" id="CLU_108953_0_1_9"/>
<dbReference type="Proteomes" id="UP000006556">
    <property type="component" value="Chromosome"/>
</dbReference>
<dbReference type="GO" id="GO:0005829">
    <property type="term" value="C:cytosol"/>
    <property type="evidence" value="ECO:0007669"/>
    <property type="project" value="TreeGrafter"/>
</dbReference>
<dbReference type="GO" id="GO:0003723">
    <property type="term" value="F:RNA binding"/>
    <property type="evidence" value="ECO:0007669"/>
    <property type="project" value="UniProtKB-UniRule"/>
</dbReference>
<dbReference type="GO" id="GO:0070929">
    <property type="term" value="P:trans-translation"/>
    <property type="evidence" value="ECO:0007669"/>
    <property type="project" value="UniProtKB-UniRule"/>
</dbReference>
<dbReference type="CDD" id="cd09294">
    <property type="entry name" value="SmpB"/>
    <property type="match status" value="1"/>
</dbReference>
<dbReference type="Gene3D" id="2.40.280.10">
    <property type="match status" value="1"/>
</dbReference>
<dbReference type="HAMAP" id="MF_00023">
    <property type="entry name" value="SmpB"/>
    <property type="match status" value="1"/>
</dbReference>
<dbReference type="InterPro" id="IPR023620">
    <property type="entry name" value="SmpB"/>
</dbReference>
<dbReference type="InterPro" id="IPR000037">
    <property type="entry name" value="SsrA-bd_prot"/>
</dbReference>
<dbReference type="InterPro" id="IPR020081">
    <property type="entry name" value="SsrA-bd_prot_CS"/>
</dbReference>
<dbReference type="NCBIfam" id="NF003843">
    <property type="entry name" value="PRK05422.1"/>
    <property type="match status" value="1"/>
</dbReference>
<dbReference type="NCBIfam" id="TIGR00086">
    <property type="entry name" value="smpB"/>
    <property type="match status" value="1"/>
</dbReference>
<dbReference type="PANTHER" id="PTHR30308:SF2">
    <property type="entry name" value="SSRA-BINDING PROTEIN"/>
    <property type="match status" value="1"/>
</dbReference>
<dbReference type="PANTHER" id="PTHR30308">
    <property type="entry name" value="TMRNA-BINDING COMPONENT OF TRANS-TRANSLATION TAGGING COMPLEX"/>
    <property type="match status" value="1"/>
</dbReference>
<dbReference type="Pfam" id="PF01668">
    <property type="entry name" value="SmpB"/>
    <property type="match status" value="1"/>
</dbReference>
<dbReference type="SUPFAM" id="SSF74982">
    <property type="entry name" value="Small protein B (SmpB)"/>
    <property type="match status" value="1"/>
</dbReference>
<dbReference type="PROSITE" id="PS01317">
    <property type="entry name" value="SSRP"/>
    <property type="match status" value="1"/>
</dbReference>
<sequence length="153" mass="17912">MAVKVVTENRRARHEYHILETFEAGLALRGTEVKSLRAGKASLQDSFARVENGELLLYNMHISPYEQGNQFNHEPKRTRRLLMHKYEILRLMGKTREKGLALIPLKVYFKNGLAKIELALAKGKKIYDRREDIASRDARREIDRAIKERMRLH</sequence>
<comment type="function">
    <text evidence="1">Required for rescue of stalled ribosomes mediated by trans-translation. Binds to transfer-messenger RNA (tmRNA), required for stable association of tmRNA with ribosomes. tmRNA and SmpB together mimic tRNA shape, replacing the anticodon stem-loop with SmpB. tmRNA is encoded by the ssrA gene; the 2 termini fold to resemble tRNA(Ala) and it encodes a 'tag peptide', a short internal open reading frame. During trans-translation Ala-aminoacylated tmRNA acts like a tRNA, entering the A-site of stalled ribosomes, displacing the stalled mRNA. The ribosome then switches to translate the ORF on the tmRNA; the nascent peptide is terminated with the 'tag peptide' encoded by the tmRNA and targeted for degradation. The ribosome is freed to recommence translation, which seems to be the essential function of trans-translation.</text>
</comment>
<comment type="subcellular location">
    <subcellularLocation>
        <location evidence="1">Cytoplasm</location>
    </subcellularLocation>
    <text evidence="1">The tmRNA-SmpB complex associates with stalled 70S ribosomes.</text>
</comment>
<comment type="similarity">
    <text evidence="1">Belongs to the SmpB family.</text>
</comment>
<accession>A5CYM8</accession>
<organism>
    <name type="scientific">Pelotomaculum thermopropionicum (strain DSM 13744 / JCM 10971 / SI)</name>
    <dbReference type="NCBI Taxonomy" id="370438"/>
    <lineage>
        <taxon>Bacteria</taxon>
        <taxon>Bacillati</taxon>
        <taxon>Bacillota</taxon>
        <taxon>Clostridia</taxon>
        <taxon>Eubacteriales</taxon>
        <taxon>Desulfotomaculaceae</taxon>
        <taxon>Pelotomaculum</taxon>
    </lineage>
</organism>
<reference key="1">
    <citation type="journal article" date="2008" name="Genome Res.">
        <title>The genome of Pelotomaculum thermopropionicum reveals niche-associated evolution in anaerobic microbiota.</title>
        <authorList>
            <person name="Kosaka T."/>
            <person name="Kato S."/>
            <person name="Shimoyama T."/>
            <person name="Ishii S."/>
            <person name="Abe T."/>
            <person name="Watanabe K."/>
        </authorList>
    </citation>
    <scope>NUCLEOTIDE SEQUENCE [LARGE SCALE GENOMIC DNA]</scope>
    <source>
        <strain>DSM 13744 / JCM 10971 / SI</strain>
    </source>
</reference>
<proteinExistence type="inferred from homology"/>
<keyword id="KW-0963">Cytoplasm</keyword>
<keyword id="KW-1185">Reference proteome</keyword>
<keyword id="KW-0694">RNA-binding</keyword>
<protein>
    <recommendedName>
        <fullName evidence="1">SsrA-binding protein</fullName>
    </recommendedName>
    <alternativeName>
        <fullName evidence="1">Small protein B</fullName>
    </alternativeName>
</protein>
<feature type="chain" id="PRO_0000331073" description="SsrA-binding protein">
    <location>
        <begin position="1"/>
        <end position="153"/>
    </location>
</feature>